<organism>
    <name type="scientific">Paramagnetospirillum magneticum (strain ATCC 700264 / AMB-1)</name>
    <name type="common">Magnetospirillum magneticum</name>
    <dbReference type="NCBI Taxonomy" id="342108"/>
    <lineage>
        <taxon>Bacteria</taxon>
        <taxon>Pseudomonadati</taxon>
        <taxon>Pseudomonadota</taxon>
        <taxon>Alphaproteobacteria</taxon>
        <taxon>Rhodospirillales</taxon>
        <taxon>Magnetospirillaceae</taxon>
        <taxon>Paramagnetospirillum</taxon>
    </lineage>
</organism>
<protein>
    <recommendedName>
        <fullName evidence="1">Large ribosomal subunit protein uL14</fullName>
    </recommendedName>
    <alternativeName>
        <fullName evidence="2">50S ribosomal protein L14</fullName>
    </alternativeName>
</protein>
<evidence type="ECO:0000255" key="1">
    <source>
        <dbReference type="HAMAP-Rule" id="MF_01367"/>
    </source>
</evidence>
<evidence type="ECO:0000305" key="2"/>
<dbReference type="EMBL" id="AP007255">
    <property type="protein sequence ID" value="BAE51924.1"/>
    <property type="molecule type" value="Genomic_DNA"/>
</dbReference>
<dbReference type="RefSeq" id="WP_002725445.1">
    <property type="nucleotide sequence ID" value="NC_007626.1"/>
</dbReference>
<dbReference type="SMR" id="Q2W2K1"/>
<dbReference type="STRING" id="342108.amb3120"/>
<dbReference type="KEGG" id="mag:amb3120"/>
<dbReference type="HOGENOM" id="CLU_095071_2_1_5"/>
<dbReference type="OrthoDB" id="9806379at2"/>
<dbReference type="Proteomes" id="UP000007058">
    <property type="component" value="Chromosome"/>
</dbReference>
<dbReference type="GO" id="GO:0022625">
    <property type="term" value="C:cytosolic large ribosomal subunit"/>
    <property type="evidence" value="ECO:0007669"/>
    <property type="project" value="TreeGrafter"/>
</dbReference>
<dbReference type="GO" id="GO:0070180">
    <property type="term" value="F:large ribosomal subunit rRNA binding"/>
    <property type="evidence" value="ECO:0007669"/>
    <property type="project" value="TreeGrafter"/>
</dbReference>
<dbReference type="GO" id="GO:0003735">
    <property type="term" value="F:structural constituent of ribosome"/>
    <property type="evidence" value="ECO:0007669"/>
    <property type="project" value="InterPro"/>
</dbReference>
<dbReference type="GO" id="GO:0006412">
    <property type="term" value="P:translation"/>
    <property type="evidence" value="ECO:0007669"/>
    <property type="project" value="UniProtKB-UniRule"/>
</dbReference>
<dbReference type="CDD" id="cd00337">
    <property type="entry name" value="Ribosomal_uL14"/>
    <property type="match status" value="1"/>
</dbReference>
<dbReference type="FunFam" id="2.40.150.20:FF:000001">
    <property type="entry name" value="50S ribosomal protein L14"/>
    <property type="match status" value="1"/>
</dbReference>
<dbReference type="Gene3D" id="2.40.150.20">
    <property type="entry name" value="Ribosomal protein L14"/>
    <property type="match status" value="1"/>
</dbReference>
<dbReference type="HAMAP" id="MF_01367">
    <property type="entry name" value="Ribosomal_uL14"/>
    <property type="match status" value="1"/>
</dbReference>
<dbReference type="InterPro" id="IPR000218">
    <property type="entry name" value="Ribosomal_uL14"/>
</dbReference>
<dbReference type="InterPro" id="IPR005745">
    <property type="entry name" value="Ribosomal_uL14_bac-type"/>
</dbReference>
<dbReference type="InterPro" id="IPR019972">
    <property type="entry name" value="Ribosomal_uL14_CS"/>
</dbReference>
<dbReference type="InterPro" id="IPR036853">
    <property type="entry name" value="Ribosomal_uL14_sf"/>
</dbReference>
<dbReference type="NCBIfam" id="TIGR01067">
    <property type="entry name" value="rplN_bact"/>
    <property type="match status" value="1"/>
</dbReference>
<dbReference type="PANTHER" id="PTHR11761">
    <property type="entry name" value="50S/60S RIBOSOMAL PROTEIN L14/L23"/>
    <property type="match status" value="1"/>
</dbReference>
<dbReference type="PANTHER" id="PTHR11761:SF3">
    <property type="entry name" value="LARGE RIBOSOMAL SUBUNIT PROTEIN UL14M"/>
    <property type="match status" value="1"/>
</dbReference>
<dbReference type="Pfam" id="PF00238">
    <property type="entry name" value="Ribosomal_L14"/>
    <property type="match status" value="1"/>
</dbReference>
<dbReference type="SMART" id="SM01374">
    <property type="entry name" value="Ribosomal_L14"/>
    <property type="match status" value="1"/>
</dbReference>
<dbReference type="SUPFAM" id="SSF50193">
    <property type="entry name" value="Ribosomal protein L14"/>
    <property type="match status" value="1"/>
</dbReference>
<dbReference type="PROSITE" id="PS00049">
    <property type="entry name" value="RIBOSOMAL_L14"/>
    <property type="match status" value="1"/>
</dbReference>
<keyword id="KW-0687">Ribonucleoprotein</keyword>
<keyword id="KW-0689">Ribosomal protein</keyword>
<keyword id="KW-0694">RNA-binding</keyword>
<keyword id="KW-0699">rRNA-binding</keyword>
<sequence length="122" mass="13312">MIQMQTNLDVADNSGARRVQCIKVLGGSHRTIATVGDVIVVSIKEAIPRGRVKKGDVHRAVIVRTAKEIRRADGSAIRFDTNAAVLINKQGEPIGTRIFGPVTRELRGKKFMKIISLAPEVL</sequence>
<comment type="function">
    <text evidence="1">Binds to 23S rRNA. Forms part of two intersubunit bridges in the 70S ribosome.</text>
</comment>
<comment type="subunit">
    <text evidence="1">Part of the 50S ribosomal subunit. Forms a cluster with proteins L3 and L19. In the 70S ribosome, L14 and L19 interact and together make contacts with the 16S rRNA in bridges B5 and B8.</text>
</comment>
<comment type="similarity">
    <text evidence="1">Belongs to the universal ribosomal protein uL14 family.</text>
</comment>
<proteinExistence type="inferred from homology"/>
<reference key="1">
    <citation type="journal article" date="2005" name="DNA Res.">
        <title>Complete genome sequence of the facultative anaerobic magnetotactic bacterium Magnetospirillum sp. strain AMB-1.</title>
        <authorList>
            <person name="Matsunaga T."/>
            <person name="Okamura Y."/>
            <person name="Fukuda Y."/>
            <person name="Wahyudi A.T."/>
            <person name="Murase Y."/>
            <person name="Takeyama H."/>
        </authorList>
    </citation>
    <scope>NUCLEOTIDE SEQUENCE [LARGE SCALE GENOMIC DNA]</scope>
    <source>
        <strain>ATCC 700264 / AMB-1</strain>
    </source>
</reference>
<gene>
    <name evidence="1" type="primary">rplN</name>
    <name type="ordered locus">amb3120</name>
</gene>
<name>RL14_PARM1</name>
<feature type="chain" id="PRO_0000266501" description="Large ribosomal subunit protein uL14">
    <location>
        <begin position="1"/>
        <end position="122"/>
    </location>
</feature>
<accession>Q2W2K1</accession>